<organism>
    <name type="scientific">Shigella boydii serotype 4 (strain Sb227)</name>
    <dbReference type="NCBI Taxonomy" id="300268"/>
    <lineage>
        <taxon>Bacteria</taxon>
        <taxon>Pseudomonadati</taxon>
        <taxon>Pseudomonadota</taxon>
        <taxon>Gammaproteobacteria</taxon>
        <taxon>Enterobacterales</taxon>
        <taxon>Enterobacteriaceae</taxon>
        <taxon>Shigella</taxon>
    </lineage>
</organism>
<sequence>MSDNDELQQIAHLRREYTKGGLRRRDLPADPLTLFERWLSQACEAKLADPTAMVVATVDEHGQPYQRIVLLKHYDEKGMVFYTNLGSRKAHQIENNPRVSLLFPWHTLERQVMVIGKAERLSTLEVMKYFHSRPRDSQIGAWVSKQSSRISARGILESKFLELKQKFQQGEVPLPSFWGGFRVSLEQIEFWQGGEHRLHDRFLYQRENDAWKIDRLAP</sequence>
<accession>Q320Z5</accession>
<feature type="chain" id="PRO_0000167755" description="Pyridoxine/pyridoxamine 5'-phosphate oxidase">
    <location>
        <begin position="1"/>
        <end position="218"/>
    </location>
</feature>
<feature type="binding site" evidence="1">
    <location>
        <begin position="14"/>
        <end position="17"/>
    </location>
    <ligand>
        <name>substrate</name>
    </ligand>
</feature>
<feature type="binding site" evidence="1">
    <location>
        <begin position="67"/>
        <end position="72"/>
    </location>
    <ligand>
        <name>FMN</name>
        <dbReference type="ChEBI" id="CHEBI:58210"/>
    </ligand>
</feature>
<feature type="binding site" evidence="1">
    <location>
        <position position="72"/>
    </location>
    <ligand>
        <name>substrate</name>
    </ligand>
</feature>
<feature type="binding site" evidence="1">
    <location>
        <begin position="82"/>
        <end position="83"/>
    </location>
    <ligand>
        <name>FMN</name>
        <dbReference type="ChEBI" id="CHEBI:58210"/>
    </ligand>
</feature>
<feature type="binding site" evidence="1">
    <location>
        <position position="88"/>
    </location>
    <ligand>
        <name>FMN</name>
        <dbReference type="ChEBI" id="CHEBI:58210"/>
    </ligand>
</feature>
<feature type="binding site" evidence="1">
    <location>
        <position position="89"/>
    </location>
    <ligand>
        <name>FMN</name>
        <dbReference type="ChEBI" id="CHEBI:58210"/>
    </ligand>
</feature>
<feature type="binding site" evidence="1">
    <location>
        <position position="111"/>
    </location>
    <ligand>
        <name>FMN</name>
        <dbReference type="ChEBI" id="CHEBI:58210"/>
    </ligand>
</feature>
<feature type="binding site" evidence="1">
    <location>
        <position position="129"/>
    </location>
    <ligand>
        <name>substrate</name>
    </ligand>
</feature>
<feature type="binding site" evidence="1">
    <location>
        <position position="133"/>
    </location>
    <ligand>
        <name>substrate</name>
    </ligand>
</feature>
<feature type="binding site" evidence="1">
    <location>
        <position position="137"/>
    </location>
    <ligand>
        <name>substrate</name>
    </ligand>
</feature>
<feature type="binding site" evidence="1">
    <location>
        <begin position="146"/>
        <end position="147"/>
    </location>
    <ligand>
        <name>FMN</name>
        <dbReference type="ChEBI" id="CHEBI:58210"/>
    </ligand>
</feature>
<feature type="binding site" evidence="1">
    <location>
        <position position="191"/>
    </location>
    <ligand>
        <name>FMN</name>
        <dbReference type="ChEBI" id="CHEBI:58210"/>
    </ligand>
</feature>
<feature type="binding site" evidence="1">
    <location>
        <begin position="197"/>
        <end position="199"/>
    </location>
    <ligand>
        <name>substrate</name>
    </ligand>
</feature>
<feature type="binding site" evidence="1">
    <location>
        <position position="201"/>
    </location>
    <ligand>
        <name>FMN</name>
        <dbReference type="ChEBI" id="CHEBI:58210"/>
    </ligand>
</feature>
<name>PDXH_SHIBS</name>
<protein>
    <recommendedName>
        <fullName evidence="1">Pyridoxine/pyridoxamine 5'-phosphate oxidase</fullName>
        <ecNumber evidence="1">1.4.3.5</ecNumber>
    </recommendedName>
    <alternativeName>
        <fullName evidence="1">PNP/PMP oxidase</fullName>
        <shortName evidence="1">PNPOx</shortName>
    </alternativeName>
    <alternativeName>
        <fullName evidence="1">Pyridoxal 5'-phosphate synthase</fullName>
    </alternativeName>
</protein>
<dbReference type="EC" id="1.4.3.5" evidence="1"/>
<dbReference type="EMBL" id="CP000036">
    <property type="protein sequence ID" value="ABB66113.1"/>
    <property type="molecule type" value="Genomic_DNA"/>
</dbReference>
<dbReference type="RefSeq" id="WP_001282319.1">
    <property type="nucleotide sequence ID" value="NC_007613.1"/>
</dbReference>
<dbReference type="SMR" id="Q320Z5"/>
<dbReference type="GeneID" id="75171699"/>
<dbReference type="KEGG" id="sbo:SBO_1496"/>
<dbReference type="HOGENOM" id="CLU_032263_2_2_6"/>
<dbReference type="UniPathway" id="UPA01068">
    <property type="reaction ID" value="UER00304"/>
</dbReference>
<dbReference type="UniPathway" id="UPA01068">
    <property type="reaction ID" value="UER00305"/>
</dbReference>
<dbReference type="Proteomes" id="UP000007067">
    <property type="component" value="Chromosome"/>
</dbReference>
<dbReference type="GO" id="GO:0010181">
    <property type="term" value="F:FMN binding"/>
    <property type="evidence" value="ECO:0007669"/>
    <property type="project" value="UniProtKB-UniRule"/>
</dbReference>
<dbReference type="GO" id="GO:0004733">
    <property type="term" value="F:pyridoxamine phosphate oxidase activity"/>
    <property type="evidence" value="ECO:0007669"/>
    <property type="project" value="UniProtKB-UniRule"/>
</dbReference>
<dbReference type="GO" id="GO:0008615">
    <property type="term" value="P:pyridoxine biosynthetic process"/>
    <property type="evidence" value="ECO:0007669"/>
    <property type="project" value="UniProtKB-KW"/>
</dbReference>
<dbReference type="FunFam" id="2.30.110.10:FF:000001">
    <property type="entry name" value="Pyridoxine/pyridoxamine 5'-phosphate oxidase"/>
    <property type="match status" value="1"/>
</dbReference>
<dbReference type="Gene3D" id="2.30.110.10">
    <property type="entry name" value="Electron Transport, Fmn-binding Protein, Chain A"/>
    <property type="match status" value="1"/>
</dbReference>
<dbReference type="HAMAP" id="MF_01629">
    <property type="entry name" value="PdxH"/>
    <property type="match status" value="1"/>
</dbReference>
<dbReference type="InterPro" id="IPR000659">
    <property type="entry name" value="Pyridox_Oxase"/>
</dbReference>
<dbReference type="InterPro" id="IPR019740">
    <property type="entry name" value="Pyridox_Oxase_CS"/>
</dbReference>
<dbReference type="InterPro" id="IPR011576">
    <property type="entry name" value="Pyridox_Oxase_N"/>
</dbReference>
<dbReference type="InterPro" id="IPR019576">
    <property type="entry name" value="Pyridoxamine_oxidase_dimer_C"/>
</dbReference>
<dbReference type="InterPro" id="IPR012349">
    <property type="entry name" value="Split_barrel_FMN-bd"/>
</dbReference>
<dbReference type="NCBIfam" id="TIGR00558">
    <property type="entry name" value="pdxH"/>
    <property type="match status" value="1"/>
</dbReference>
<dbReference type="NCBIfam" id="NF004231">
    <property type="entry name" value="PRK05679.1"/>
    <property type="match status" value="1"/>
</dbReference>
<dbReference type="PANTHER" id="PTHR10851:SF0">
    <property type="entry name" value="PYRIDOXINE-5'-PHOSPHATE OXIDASE"/>
    <property type="match status" value="1"/>
</dbReference>
<dbReference type="PANTHER" id="PTHR10851">
    <property type="entry name" value="PYRIDOXINE-5-PHOSPHATE OXIDASE"/>
    <property type="match status" value="1"/>
</dbReference>
<dbReference type="Pfam" id="PF10590">
    <property type="entry name" value="PNP_phzG_C"/>
    <property type="match status" value="1"/>
</dbReference>
<dbReference type="Pfam" id="PF01243">
    <property type="entry name" value="PNPOx_N"/>
    <property type="match status" value="1"/>
</dbReference>
<dbReference type="PIRSF" id="PIRSF000190">
    <property type="entry name" value="Pyd_amn-ph_oxd"/>
    <property type="match status" value="1"/>
</dbReference>
<dbReference type="SUPFAM" id="SSF50475">
    <property type="entry name" value="FMN-binding split barrel"/>
    <property type="match status" value="1"/>
</dbReference>
<dbReference type="PROSITE" id="PS01064">
    <property type="entry name" value="PYRIDOX_OXIDASE"/>
    <property type="match status" value="1"/>
</dbReference>
<keyword id="KW-0285">Flavoprotein</keyword>
<keyword id="KW-0288">FMN</keyword>
<keyword id="KW-0560">Oxidoreductase</keyword>
<keyword id="KW-0664">Pyridoxine biosynthesis</keyword>
<evidence type="ECO:0000255" key="1">
    <source>
        <dbReference type="HAMAP-Rule" id="MF_01629"/>
    </source>
</evidence>
<comment type="function">
    <text evidence="1">Catalyzes the oxidation of either pyridoxine 5'-phosphate (PNP) or pyridoxamine 5'-phosphate (PMP) into pyridoxal 5'-phosphate (PLP).</text>
</comment>
<comment type="catalytic activity">
    <reaction evidence="1">
        <text>pyridoxamine 5'-phosphate + O2 + H2O = pyridoxal 5'-phosphate + H2O2 + NH4(+)</text>
        <dbReference type="Rhea" id="RHEA:15817"/>
        <dbReference type="ChEBI" id="CHEBI:15377"/>
        <dbReference type="ChEBI" id="CHEBI:15379"/>
        <dbReference type="ChEBI" id="CHEBI:16240"/>
        <dbReference type="ChEBI" id="CHEBI:28938"/>
        <dbReference type="ChEBI" id="CHEBI:58451"/>
        <dbReference type="ChEBI" id="CHEBI:597326"/>
        <dbReference type="EC" id="1.4.3.5"/>
    </reaction>
</comment>
<comment type="catalytic activity">
    <reaction evidence="1">
        <text>pyridoxine 5'-phosphate + O2 = pyridoxal 5'-phosphate + H2O2</text>
        <dbReference type="Rhea" id="RHEA:15149"/>
        <dbReference type="ChEBI" id="CHEBI:15379"/>
        <dbReference type="ChEBI" id="CHEBI:16240"/>
        <dbReference type="ChEBI" id="CHEBI:58589"/>
        <dbReference type="ChEBI" id="CHEBI:597326"/>
        <dbReference type="EC" id="1.4.3.5"/>
    </reaction>
</comment>
<comment type="cofactor">
    <cofactor evidence="1">
        <name>FMN</name>
        <dbReference type="ChEBI" id="CHEBI:58210"/>
    </cofactor>
    <text evidence="1">Binds 1 FMN per subunit.</text>
</comment>
<comment type="pathway">
    <text evidence="1">Cofactor metabolism; pyridoxal 5'-phosphate salvage; pyridoxal 5'-phosphate from pyridoxamine 5'-phosphate: step 1/1.</text>
</comment>
<comment type="pathway">
    <text evidence="1">Cofactor metabolism; pyridoxal 5'-phosphate salvage; pyridoxal 5'-phosphate from pyridoxine 5'-phosphate: step 1/1.</text>
</comment>
<comment type="subunit">
    <text evidence="1">Homodimer.</text>
</comment>
<comment type="similarity">
    <text evidence="1">Belongs to the pyridoxamine 5'-phosphate oxidase family.</text>
</comment>
<gene>
    <name evidence="1" type="primary">pdxH</name>
    <name type="ordered locus">SBO_1496</name>
</gene>
<reference key="1">
    <citation type="journal article" date="2005" name="Nucleic Acids Res.">
        <title>Genome dynamics and diversity of Shigella species, the etiologic agents of bacillary dysentery.</title>
        <authorList>
            <person name="Yang F."/>
            <person name="Yang J."/>
            <person name="Zhang X."/>
            <person name="Chen L."/>
            <person name="Jiang Y."/>
            <person name="Yan Y."/>
            <person name="Tang X."/>
            <person name="Wang J."/>
            <person name="Xiong Z."/>
            <person name="Dong J."/>
            <person name="Xue Y."/>
            <person name="Zhu Y."/>
            <person name="Xu X."/>
            <person name="Sun L."/>
            <person name="Chen S."/>
            <person name="Nie H."/>
            <person name="Peng J."/>
            <person name="Xu J."/>
            <person name="Wang Y."/>
            <person name="Yuan Z."/>
            <person name="Wen Y."/>
            <person name="Yao Z."/>
            <person name="Shen Y."/>
            <person name="Qiang B."/>
            <person name="Hou Y."/>
            <person name="Yu J."/>
            <person name="Jin Q."/>
        </authorList>
    </citation>
    <scope>NUCLEOTIDE SEQUENCE [LARGE SCALE GENOMIC DNA]</scope>
    <source>
        <strain>Sb227</strain>
    </source>
</reference>
<proteinExistence type="inferred from homology"/>